<gene>
    <name evidence="1" type="primary">trmFO</name>
    <name type="ordered locus">MGAS10750_Spy1042</name>
</gene>
<organism>
    <name type="scientific">Streptococcus pyogenes serotype M4 (strain MGAS10750)</name>
    <dbReference type="NCBI Taxonomy" id="370554"/>
    <lineage>
        <taxon>Bacteria</taxon>
        <taxon>Bacillati</taxon>
        <taxon>Bacillota</taxon>
        <taxon>Bacilli</taxon>
        <taxon>Lactobacillales</taxon>
        <taxon>Streptococcaceae</taxon>
        <taxon>Streptococcus</taxon>
    </lineage>
</organism>
<comment type="function">
    <text evidence="1">Catalyzes the folate-dependent formation of 5-methyl-uridine at position 54 (M-5-U54) in all tRNAs.</text>
</comment>
<comment type="catalytic activity">
    <reaction evidence="1">
        <text>uridine(54) in tRNA + (6R)-5,10-methylene-5,6,7,8-tetrahydrofolate + NADH + H(+) = 5-methyluridine(54) in tRNA + (6S)-5,6,7,8-tetrahydrofolate + NAD(+)</text>
        <dbReference type="Rhea" id="RHEA:16873"/>
        <dbReference type="Rhea" id="RHEA-COMP:10167"/>
        <dbReference type="Rhea" id="RHEA-COMP:10193"/>
        <dbReference type="ChEBI" id="CHEBI:15378"/>
        <dbReference type="ChEBI" id="CHEBI:15636"/>
        <dbReference type="ChEBI" id="CHEBI:57453"/>
        <dbReference type="ChEBI" id="CHEBI:57540"/>
        <dbReference type="ChEBI" id="CHEBI:57945"/>
        <dbReference type="ChEBI" id="CHEBI:65315"/>
        <dbReference type="ChEBI" id="CHEBI:74447"/>
        <dbReference type="EC" id="2.1.1.74"/>
    </reaction>
</comment>
<comment type="catalytic activity">
    <reaction evidence="1">
        <text>uridine(54) in tRNA + (6R)-5,10-methylene-5,6,7,8-tetrahydrofolate + NADPH + H(+) = 5-methyluridine(54) in tRNA + (6S)-5,6,7,8-tetrahydrofolate + NADP(+)</text>
        <dbReference type="Rhea" id="RHEA:62372"/>
        <dbReference type="Rhea" id="RHEA-COMP:10167"/>
        <dbReference type="Rhea" id="RHEA-COMP:10193"/>
        <dbReference type="ChEBI" id="CHEBI:15378"/>
        <dbReference type="ChEBI" id="CHEBI:15636"/>
        <dbReference type="ChEBI" id="CHEBI:57453"/>
        <dbReference type="ChEBI" id="CHEBI:57783"/>
        <dbReference type="ChEBI" id="CHEBI:58349"/>
        <dbReference type="ChEBI" id="CHEBI:65315"/>
        <dbReference type="ChEBI" id="CHEBI:74447"/>
        <dbReference type="EC" id="2.1.1.74"/>
    </reaction>
</comment>
<comment type="cofactor">
    <cofactor evidence="1">
        <name>FAD</name>
        <dbReference type="ChEBI" id="CHEBI:57692"/>
    </cofactor>
</comment>
<comment type="subcellular location">
    <subcellularLocation>
        <location evidence="1">Cytoplasm</location>
    </subcellularLocation>
</comment>
<comment type="similarity">
    <text evidence="1">Belongs to the MnmG family. TrmFO subfamily.</text>
</comment>
<comment type="sequence caution" evidence="2">
    <conflict type="erroneous initiation">
        <sequence resource="EMBL-CDS" id="ABF37992"/>
    </conflict>
</comment>
<feature type="chain" id="PRO_0000346403" description="Methylenetetrahydrofolate--tRNA-(uracil-5-)-methyltransferase TrmFO">
    <location>
        <begin position="1"/>
        <end position="448"/>
    </location>
</feature>
<feature type="binding site" evidence="1">
    <location>
        <begin position="13"/>
        <end position="18"/>
    </location>
    <ligand>
        <name>FAD</name>
        <dbReference type="ChEBI" id="CHEBI:57692"/>
    </ligand>
</feature>
<sequence>MSQSTATYINVIGAGLAGSEAAYQIAKRGIPVKLYEMRGVKATPQHKTTNFAELVCSNSFRGDSLTNAVGLLKEEMRRLDSIIMRNGEANRVPAGGAMAVDREGYAESVTAELENHPLIEVIRDEITEIPDDAITVIATGPLTSDALAEKIHALNGGDGFYFYDAAAPIIDKSTIDMSKVYLKSRYDKGEAAYLNCPMTKEEFMAFHDALTTAEEAPLNAFEKEKYFEGCMPIEVMAKRGIKTMLYGPMKPVGLEYPDDYTGPRDGEFKTPYAVVQLRQDNAAGSLYNIVGFQTHLKWGEQKRVFQMIPGLENAEFVRYGVMHRNSYMDSPNLLTETFQSRSNPNLFFAGQMTGVEGYVESAASGLVAGINAARLFKREEALIFPQTTAIGSLPHYVTHADSKHFQPMNVNFGIIKELEGPRIRDKKERYAAIASRALADLDTCLASL</sequence>
<accession>Q1J6J1</accession>
<dbReference type="EC" id="2.1.1.74" evidence="1"/>
<dbReference type="EMBL" id="CP000262">
    <property type="protein sequence ID" value="ABF37992.1"/>
    <property type="status" value="ALT_INIT"/>
    <property type="molecule type" value="Genomic_DNA"/>
</dbReference>
<dbReference type="SMR" id="Q1J6J1"/>
<dbReference type="KEGG" id="spi:MGAS10750_Spy1042"/>
<dbReference type="HOGENOM" id="CLU_033057_1_0_9"/>
<dbReference type="Proteomes" id="UP000002434">
    <property type="component" value="Chromosome"/>
</dbReference>
<dbReference type="GO" id="GO:0005829">
    <property type="term" value="C:cytosol"/>
    <property type="evidence" value="ECO:0007669"/>
    <property type="project" value="TreeGrafter"/>
</dbReference>
<dbReference type="GO" id="GO:0050660">
    <property type="term" value="F:flavin adenine dinucleotide binding"/>
    <property type="evidence" value="ECO:0007669"/>
    <property type="project" value="UniProtKB-UniRule"/>
</dbReference>
<dbReference type="GO" id="GO:0047151">
    <property type="term" value="F:tRNA (uracil(54)-C5)-methyltransferase activity, 5,10-methylenetetrahydrofolate-dependent"/>
    <property type="evidence" value="ECO:0007669"/>
    <property type="project" value="UniProtKB-UniRule"/>
</dbReference>
<dbReference type="GO" id="GO:0030488">
    <property type="term" value="P:tRNA methylation"/>
    <property type="evidence" value="ECO:0007669"/>
    <property type="project" value="TreeGrafter"/>
</dbReference>
<dbReference type="GO" id="GO:0002098">
    <property type="term" value="P:tRNA wobble uridine modification"/>
    <property type="evidence" value="ECO:0007669"/>
    <property type="project" value="TreeGrafter"/>
</dbReference>
<dbReference type="FunFam" id="3.50.50.60:FF:000035">
    <property type="entry name" value="Methylenetetrahydrofolate--tRNA-(uracil-5-)-methyltransferase TrmFO"/>
    <property type="match status" value="1"/>
</dbReference>
<dbReference type="FunFam" id="3.50.50.60:FF:000040">
    <property type="entry name" value="Methylenetetrahydrofolate--tRNA-(uracil-5-)-methyltransferase TrmFO"/>
    <property type="match status" value="1"/>
</dbReference>
<dbReference type="Gene3D" id="3.50.50.60">
    <property type="entry name" value="FAD/NAD(P)-binding domain"/>
    <property type="match status" value="2"/>
</dbReference>
<dbReference type="HAMAP" id="MF_01037">
    <property type="entry name" value="TrmFO"/>
    <property type="match status" value="1"/>
</dbReference>
<dbReference type="InterPro" id="IPR036188">
    <property type="entry name" value="FAD/NAD-bd_sf"/>
</dbReference>
<dbReference type="InterPro" id="IPR002218">
    <property type="entry name" value="MnmG-rel"/>
</dbReference>
<dbReference type="InterPro" id="IPR020595">
    <property type="entry name" value="MnmG-rel_CS"/>
</dbReference>
<dbReference type="InterPro" id="IPR040131">
    <property type="entry name" value="MnmG_N"/>
</dbReference>
<dbReference type="InterPro" id="IPR004417">
    <property type="entry name" value="TrmFO"/>
</dbReference>
<dbReference type="NCBIfam" id="TIGR00137">
    <property type="entry name" value="gid_trmFO"/>
    <property type="match status" value="1"/>
</dbReference>
<dbReference type="NCBIfam" id="NF003739">
    <property type="entry name" value="PRK05335.1"/>
    <property type="match status" value="1"/>
</dbReference>
<dbReference type="PANTHER" id="PTHR11806">
    <property type="entry name" value="GLUCOSE INHIBITED DIVISION PROTEIN A"/>
    <property type="match status" value="1"/>
</dbReference>
<dbReference type="PANTHER" id="PTHR11806:SF2">
    <property type="entry name" value="METHYLENETETRAHYDROFOLATE--TRNA-(URACIL-5-)-METHYLTRANSFERASE TRMFO"/>
    <property type="match status" value="1"/>
</dbReference>
<dbReference type="Pfam" id="PF01134">
    <property type="entry name" value="GIDA"/>
    <property type="match status" value="1"/>
</dbReference>
<dbReference type="SUPFAM" id="SSF51905">
    <property type="entry name" value="FAD/NAD(P)-binding domain"/>
    <property type="match status" value="1"/>
</dbReference>
<dbReference type="PROSITE" id="PS01281">
    <property type="entry name" value="GIDA_2"/>
    <property type="match status" value="1"/>
</dbReference>
<reference key="1">
    <citation type="journal article" date="2006" name="Proc. Natl. Acad. Sci. U.S.A.">
        <title>Molecular genetic anatomy of inter- and intraserotype variation in the human bacterial pathogen group A Streptococcus.</title>
        <authorList>
            <person name="Beres S.B."/>
            <person name="Richter E.W."/>
            <person name="Nagiec M.J."/>
            <person name="Sumby P."/>
            <person name="Porcella S.F."/>
            <person name="DeLeo F.R."/>
            <person name="Musser J.M."/>
        </authorList>
    </citation>
    <scope>NUCLEOTIDE SEQUENCE [LARGE SCALE GENOMIC DNA]</scope>
    <source>
        <strain>MGAS10750</strain>
    </source>
</reference>
<keyword id="KW-0963">Cytoplasm</keyword>
<keyword id="KW-0274">FAD</keyword>
<keyword id="KW-0285">Flavoprotein</keyword>
<keyword id="KW-0489">Methyltransferase</keyword>
<keyword id="KW-0520">NAD</keyword>
<keyword id="KW-0521">NADP</keyword>
<keyword id="KW-0808">Transferase</keyword>
<keyword id="KW-0819">tRNA processing</keyword>
<evidence type="ECO:0000255" key="1">
    <source>
        <dbReference type="HAMAP-Rule" id="MF_01037"/>
    </source>
</evidence>
<evidence type="ECO:0000305" key="2"/>
<name>TRMFO_STRPF</name>
<protein>
    <recommendedName>
        <fullName evidence="1">Methylenetetrahydrofolate--tRNA-(uracil-5-)-methyltransferase TrmFO</fullName>
        <ecNumber evidence="1">2.1.1.74</ecNumber>
    </recommendedName>
    <alternativeName>
        <fullName evidence="1">Folate-dependent tRNA (uracil-5-)-methyltransferase</fullName>
    </alternativeName>
    <alternativeName>
        <fullName evidence="1">Folate-dependent tRNA(M-5-U54)-methyltransferase</fullName>
    </alternativeName>
</protein>
<proteinExistence type="inferred from homology"/>